<evidence type="ECO:0000250" key="1"/>
<evidence type="ECO:0000255" key="2"/>
<evidence type="ECO:0000255" key="3">
    <source>
        <dbReference type="PROSITE-ProRule" id="PRU00068"/>
    </source>
</evidence>
<evidence type="ECO:0000255" key="4">
    <source>
        <dbReference type="PROSITE-ProRule" id="PRU00276"/>
    </source>
</evidence>
<evidence type="ECO:0000255" key="5">
    <source>
        <dbReference type="PROSITE-ProRule" id="PRU10095"/>
    </source>
</evidence>
<evidence type="ECO:0000269" key="6">
    <source>
    </source>
</evidence>
<evidence type="ECO:0000305" key="7"/>
<evidence type="ECO:0000305" key="8">
    <source>
    </source>
</evidence>
<dbReference type="EC" id="3.4.24.-"/>
<dbReference type="EMBL" id="GU902978">
    <property type="protein sequence ID" value="ADD14036.1"/>
    <property type="molecule type" value="mRNA"/>
</dbReference>
<dbReference type="EMBL" id="GU985447">
    <property type="protein sequence ID" value="ADG02948.1"/>
    <property type="molecule type" value="mRNA"/>
</dbReference>
<dbReference type="SMR" id="D6PXE8"/>
<dbReference type="MEROPS" id="M12.236"/>
<dbReference type="TopDownProteomics" id="D6PXE8"/>
<dbReference type="GO" id="GO:0005576">
    <property type="term" value="C:extracellular region"/>
    <property type="evidence" value="ECO:0007669"/>
    <property type="project" value="UniProtKB-SubCell"/>
</dbReference>
<dbReference type="GO" id="GO:0005886">
    <property type="term" value="C:plasma membrane"/>
    <property type="evidence" value="ECO:0007669"/>
    <property type="project" value="TreeGrafter"/>
</dbReference>
<dbReference type="GO" id="GO:0046872">
    <property type="term" value="F:metal ion binding"/>
    <property type="evidence" value="ECO:0007669"/>
    <property type="project" value="UniProtKB-KW"/>
</dbReference>
<dbReference type="GO" id="GO:0004222">
    <property type="term" value="F:metalloendopeptidase activity"/>
    <property type="evidence" value="ECO:0007669"/>
    <property type="project" value="InterPro"/>
</dbReference>
<dbReference type="GO" id="GO:0090729">
    <property type="term" value="F:toxin activity"/>
    <property type="evidence" value="ECO:0007669"/>
    <property type="project" value="UniProtKB-KW"/>
</dbReference>
<dbReference type="GO" id="GO:0006508">
    <property type="term" value="P:proteolysis"/>
    <property type="evidence" value="ECO:0007669"/>
    <property type="project" value="UniProtKB-KW"/>
</dbReference>
<dbReference type="CDD" id="cd04269">
    <property type="entry name" value="ZnMc_adamalysin_II_like"/>
    <property type="match status" value="1"/>
</dbReference>
<dbReference type="FunFam" id="3.40.390.10:FF:000002">
    <property type="entry name" value="Disintegrin and metalloproteinase domain-containing protein 22"/>
    <property type="match status" value="1"/>
</dbReference>
<dbReference type="Gene3D" id="3.40.1620.60">
    <property type="match status" value="1"/>
</dbReference>
<dbReference type="Gene3D" id="3.40.390.10">
    <property type="entry name" value="Collagenase (Catalytic Domain)"/>
    <property type="match status" value="1"/>
</dbReference>
<dbReference type="Gene3D" id="4.10.70.10">
    <property type="entry name" value="Disintegrin domain"/>
    <property type="match status" value="2"/>
</dbReference>
<dbReference type="InterPro" id="IPR006586">
    <property type="entry name" value="ADAM_Cys-rich"/>
</dbReference>
<dbReference type="InterPro" id="IPR001762">
    <property type="entry name" value="Disintegrin_dom"/>
</dbReference>
<dbReference type="InterPro" id="IPR036436">
    <property type="entry name" value="Disintegrin_dom_sf"/>
</dbReference>
<dbReference type="InterPro" id="IPR024079">
    <property type="entry name" value="MetalloPept_cat_dom_sf"/>
</dbReference>
<dbReference type="InterPro" id="IPR001590">
    <property type="entry name" value="Peptidase_M12B"/>
</dbReference>
<dbReference type="InterPro" id="IPR002870">
    <property type="entry name" value="Peptidase_M12B_N"/>
</dbReference>
<dbReference type="InterPro" id="IPR034027">
    <property type="entry name" value="Reprolysin_adamalysin"/>
</dbReference>
<dbReference type="PANTHER" id="PTHR11905">
    <property type="entry name" value="ADAM A DISINTEGRIN AND METALLOPROTEASE DOMAIN"/>
    <property type="match status" value="1"/>
</dbReference>
<dbReference type="PANTHER" id="PTHR11905:SF32">
    <property type="entry name" value="DISINTEGRIN AND METALLOPROTEINASE DOMAIN-CONTAINING PROTEIN 28"/>
    <property type="match status" value="1"/>
</dbReference>
<dbReference type="Pfam" id="PF08516">
    <property type="entry name" value="ADAM_CR"/>
    <property type="match status" value="1"/>
</dbReference>
<dbReference type="Pfam" id="PF01562">
    <property type="entry name" value="Pep_M12B_propep"/>
    <property type="match status" value="1"/>
</dbReference>
<dbReference type="Pfam" id="PF01421">
    <property type="entry name" value="Reprolysin"/>
    <property type="match status" value="1"/>
</dbReference>
<dbReference type="SMART" id="SM00608">
    <property type="entry name" value="ACR"/>
    <property type="match status" value="1"/>
</dbReference>
<dbReference type="SMART" id="SM00050">
    <property type="entry name" value="DISIN"/>
    <property type="match status" value="1"/>
</dbReference>
<dbReference type="SUPFAM" id="SSF57552">
    <property type="entry name" value="Blood coagulation inhibitor (disintegrin)"/>
    <property type="match status" value="1"/>
</dbReference>
<dbReference type="SUPFAM" id="SSF55486">
    <property type="entry name" value="Metalloproteases ('zincins'), catalytic domain"/>
    <property type="match status" value="1"/>
</dbReference>
<dbReference type="PROSITE" id="PS50215">
    <property type="entry name" value="ADAM_MEPRO"/>
    <property type="match status" value="1"/>
</dbReference>
<dbReference type="PROSITE" id="PS50214">
    <property type="entry name" value="DISINTEGRIN_2"/>
    <property type="match status" value="1"/>
</dbReference>
<dbReference type="PROSITE" id="PS00142">
    <property type="entry name" value="ZINC_PROTEASE"/>
    <property type="match status" value="1"/>
</dbReference>
<reference key="1">
    <citation type="journal article" date="2010" name="Toxicon">
        <title>Purification, cloning and characterization of a metalloproteinase from Naja atra venom.</title>
        <authorList>
            <person name="Sun Q.Y."/>
            <person name="Bao J."/>
        </authorList>
    </citation>
    <scope>NUCLEOTIDE SEQUENCE [MRNA]</scope>
    <scope>PROTEIN SEQUENCE OF 192-211</scope>
    <scope>FUNCTION</scope>
    <scope>ACTIVITY REGULATION</scope>
    <scope>IDENTIFICATION BY MASS SPECTROMETRY</scope>
    <source>
        <tissue>Venom gland</tissue>
    </source>
</reference>
<reference key="2">
    <citation type="journal article" date="2013" name="Proc. Natl. Acad. Sci. U.S.A.">
        <title>The king cobra genome reveals dynamic gene evolution and adaptation in the snake venom system.</title>
        <authorList>
            <person name="Vonk F.J."/>
            <person name="Casewell N.R."/>
            <person name="Henkel C.V."/>
            <person name="Heimberg A.M."/>
            <person name="Jansen H.J."/>
            <person name="McCleary R.J."/>
            <person name="Kerkkamp H.M."/>
            <person name="Vos R.A."/>
            <person name="Guerreiro I."/>
            <person name="Calvete J.J."/>
            <person name="Wuster W."/>
            <person name="Woods A.E."/>
            <person name="Logan J.M."/>
            <person name="Harrison R.A."/>
            <person name="Castoe T.A."/>
            <person name="de Koning A.P."/>
            <person name="Pollock D.D."/>
            <person name="Yandell M."/>
            <person name="Calderon D."/>
            <person name="Renjifo C."/>
            <person name="Currier R.B."/>
            <person name="Salgado D."/>
            <person name="Pla D."/>
            <person name="Sanz L."/>
            <person name="Hyder A.S."/>
            <person name="Ribeiro J.M."/>
            <person name="Arntzen J.W."/>
            <person name="van den Thillart G.E."/>
            <person name="Boetzer M."/>
            <person name="Pirovano W."/>
            <person name="Dirks R.P."/>
            <person name="Spaink H.P."/>
            <person name="Duboule D."/>
            <person name="McGlinn E."/>
            <person name="Kini R.M."/>
            <person name="Richardson M.K."/>
        </authorList>
    </citation>
    <scope>IDENTIFICATION BY MASS SPECTROMETRY</scope>
    <source>
        <tissue>Venom</tissue>
    </source>
</reference>
<sequence>MIQALLVIICLAVFPHQGSSIILESGNVNDYEVVYPQKVPALLKGGVQNPQPETKYEDTMRYEFQVNGEPVVLHLERNKGLFSEDYTETHYAPDGREITTSPPVQDHCYYHGYIQNEADSSAVISACDGLKGHFEHQGETYFIEPLKISNSEAHAIYKDENVENEDETPEICGVTETTWESDESIEKTSQLTNTPEQDRYLQDKKYIEFYVIVDNRMYRYYNNDKPAIKIRVYEMINAVNTKFRPLKIHIALIGLEIWSNKDKFEVKPAASVTLKSFGEWRETVLLPRKRNDNAQLLTGIDFNGNTVGRAYIGSLCKTNESVAIVQDYNRRISLVASTMTHELGHNLGIHHDKASCICIPGPCIMLKKRTAPAFQFSSCSIREYREYLLRDRPQCILNKPLSTDIVSPPICGNYFVEVGEECDCGSPQACQSACCNAATCQFKGAETECRVAKDDCDLPELCTGQSAECPTDSLQRNGHPCQNNQGYCYNRTCPTLTNQCITLLGPHFTVSPKGCFDLNMRGDDGSFCGMEDGTKIPCAAKDVKCGRLYCTEKNTMSCLIPPNPDGIMAEPGTKCGDGMVCSKGQCVDVQTAY</sequence>
<protein>
    <recommendedName>
        <fullName>Zinc metalloproteinase-disintegrin-like atrase-B</fullName>
        <ecNumber>3.4.24.-</ecNumber>
    </recommendedName>
    <alternativeName>
        <fullName>Snake venom metalloproteinase</fullName>
        <shortName>SVMP</shortName>
    </alternativeName>
</protein>
<name>VM3B_NAJAT</name>
<feature type="signal peptide" evidence="2">
    <location>
        <begin position="1"/>
        <end position="20"/>
    </location>
</feature>
<feature type="propeptide" id="PRO_0000418031" evidence="6">
    <location>
        <begin position="21"/>
        <end position="191"/>
    </location>
</feature>
<feature type="chain" id="PRO_0000418032" description="Zinc metalloproteinase-disintegrin-like atrase-B">
    <location>
        <begin position="192"/>
        <end position="593"/>
    </location>
</feature>
<feature type="domain" description="Peptidase M12B" evidence="4">
    <location>
        <begin position="205"/>
        <end position="400"/>
    </location>
</feature>
<feature type="domain" description="Disintegrin" evidence="3">
    <location>
        <begin position="408"/>
        <end position="477"/>
    </location>
</feature>
<feature type="short sequence motif" description="D/ECD-tripeptide">
    <location>
        <begin position="455"/>
        <end position="457"/>
    </location>
</feature>
<feature type="active site" evidence="4 5">
    <location>
        <position position="342"/>
    </location>
</feature>
<feature type="binding site" evidence="1">
    <location>
        <position position="208"/>
    </location>
    <ligand>
        <name>Ca(2+)</name>
        <dbReference type="ChEBI" id="CHEBI:29108"/>
        <label>1</label>
    </ligand>
</feature>
<feature type="binding site" evidence="1">
    <location>
        <position position="292"/>
    </location>
    <ligand>
        <name>Ca(2+)</name>
        <dbReference type="ChEBI" id="CHEBI:29108"/>
        <label>1</label>
    </ligand>
</feature>
<feature type="binding site" evidence="1">
    <location>
        <position position="341"/>
    </location>
    <ligand>
        <name>Zn(2+)</name>
        <dbReference type="ChEBI" id="CHEBI:29105"/>
        <note>catalytic</note>
    </ligand>
</feature>
<feature type="binding site" evidence="1">
    <location>
        <position position="345"/>
    </location>
    <ligand>
        <name>Zn(2+)</name>
        <dbReference type="ChEBI" id="CHEBI:29105"/>
        <note>catalytic</note>
    </ligand>
</feature>
<feature type="binding site" evidence="1">
    <location>
        <position position="351"/>
    </location>
    <ligand>
        <name>Zn(2+)</name>
        <dbReference type="ChEBI" id="CHEBI:29105"/>
        <note>catalytic</note>
    </ligand>
</feature>
<feature type="binding site" evidence="1">
    <location>
        <position position="395"/>
    </location>
    <ligand>
        <name>Ca(2+)</name>
        <dbReference type="ChEBI" id="CHEBI:29108"/>
        <label>1</label>
    </ligand>
</feature>
<feature type="binding site" evidence="1">
    <location>
        <position position="398"/>
    </location>
    <ligand>
        <name>Ca(2+)</name>
        <dbReference type="ChEBI" id="CHEBI:29108"/>
        <label>1</label>
    </ligand>
</feature>
<feature type="binding site" evidence="1">
    <location>
        <position position="410"/>
    </location>
    <ligand>
        <name>Ca(2+)</name>
        <dbReference type="ChEBI" id="CHEBI:29108"/>
        <label>2</label>
    </ligand>
</feature>
<feature type="binding site" evidence="1">
    <location>
        <position position="413"/>
    </location>
    <ligand>
        <name>Ca(2+)</name>
        <dbReference type="ChEBI" id="CHEBI:29108"/>
        <label>2</label>
    </ligand>
</feature>
<feature type="binding site" evidence="1">
    <location>
        <position position="415"/>
    </location>
    <ligand>
        <name>Ca(2+)</name>
        <dbReference type="ChEBI" id="CHEBI:29108"/>
        <label>2</label>
    </ligand>
</feature>
<feature type="binding site" evidence="1">
    <location>
        <position position="417"/>
    </location>
    <ligand>
        <name>Ca(2+)</name>
        <dbReference type="ChEBI" id="CHEBI:29108"/>
        <label>2</label>
    </ligand>
</feature>
<feature type="binding site" evidence="1">
    <location>
        <position position="420"/>
    </location>
    <ligand>
        <name>Ca(2+)</name>
        <dbReference type="ChEBI" id="CHEBI:29108"/>
        <label>2</label>
    </ligand>
</feature>
<feature type="binding site" evidence="1">
    <location>
        <position position="423"/>
    </location>
    <ligand>
        <name>Ca(2+)</name>
        <dbReference type="ChEBI" id="CHEBI:29108"/>
        <label>2</label>
    </ligand>
</feature>
<feature type="binding site" evidence="1">
    <location>
        <position position="457"/>
    </location>
    <ligand>
        <name>Ca(2+)</name>
        <dbReference type="ChEBI" id="CHEBI:29108"/>
        <label>3</label>
    </ligand>
</feature>
<feature type="binding site" evidence="1">
    <location>
        <position position="458"/>
    </location>
    <ligand>
        <name>Ca(2+)</name>
        <dbReference type="ChEBI" id="CHEBI:29108"/>
        <label>3</label>
    </ligand>
</feature>
<feature type="binding site" evidence="1">
    <location>
        <position position="460"/>
    </location>
    <ligand>
        <name>Ca(2+)</name>
        <dbReference type="ChEBI" id="CHEBI:29108"/>
        <label>3</label>
    </ligand>
</feature>
<feature type="binding site" evidence="1">
    <location>
        <position position="472"/>
    </location>
    <ligand>
        <name>Ca(2+)</name>
        <dbReference type="ChEBI" id="CHEBI:29108"/>
        <label>3</label>
    </ligand>
</feature>
<feature type="glycosylation site" description="N-linked (GlcNAc...) asparagine" evidence="2">
    <location>
        <position position="319"/>
    </location>
</feature>
<feature type="glycosylation site" description="N-linked (GlcNAc...) asparagine" evidence="2">
    <location>
        <position position="490"/>
    </location>
</feature>
<feature type="disulfide bond" evidence="1">
    <location>
        <begin position="316"/>
        <end position="395"/>
    </location>
</feature>
<feature type="disulfide bond" evidence="1">
    <location>
        <begin position="356"/>
        <end position="379"/>
    </location>
</feature>
<feature type="disulfide bond" evidence="1">
    <location>
        <begin position="358"/>
        <end position="363"/>
    </location>
</feature>
<feature type="disulfide bond" evidence="1">
    <location>
        <begin position="422"/>
        <end position="435"/>
    </location>
</feature>
<feature type="disulfide bond" evidence="1">
    <location>
        <begin position="424"/>
        <end position="430"/>
    </location>
</feature>
<feature type="disulfide bond" evidence="1">
    <location>
        <begin position="434"/>
        <end position="440"/>
    </location>
</feature>
<feature type="disulfide bond" evidence="1">
    <location>
        <begin position="449"/>
        <end position="469"/>
    </location>
</feature>
<feature type="disulfide bond" evidence="1">
    <location>
        <begin position="456"/>
        <end position="488"/>
    </location>
</feature>
<feature type="disulfide bond" evidence="1">
    <location>
        <begin position="481"/>
        <end position="493"/>
    </location>
</feature>
<feature type="disulfide bond" evidence="1">
    <location>
        <begin position="500"/>
        <end position="550"/>
    </location>
</feature>
<feature type="disulfide bond" evidence="1">
    <location>
        <begin position="515"/>
        <end position="558"/>
    </location>
</feature>
<feature type="disulfide bond" evidence="1">
    <location>
        <begin position="528"/>
        <end position="538"/>
    </location>
</feature>
<feature type="disulfide bond" evidence="1">
    <location>
        <begin position="545"/>
        <end position="581"/>
    </location>
</feature>
<feature type="disulfide bond" evidence="1">
    <location>
        <begin position="575"/>
        <end position="586"/>
    </location>
</feature>
<comment type="function">
    <text evidence="6">Snake venom zinc protease that inhibits the classical and alternative pathways of complement by cleaving factor B, C6, C7, and C8. Also slowly and selectively degrades alpha-chain of fibrinogen (FGA), and shows edema-inducing activity.</text>
</comment>
<comment type="cofactor">
    <cofactor evidence="1">
        <name>Zn(2+)</name>
        <dbReference type="ChEBI" id="CHEBI:29105"/>
    </cofactor>
    <text evidence="1">Binds 1 zinc ion per subunit.</text>
</comment>
<comment type="activity regulation">
    <text evidence="6">Inhibited by EDTA, EGTA, 1,10-phenanthroline and DTT. Not inhibited by PMSF and SBTI.</text>
</comment>
<comment type="subunit">
    <text>Monomer.</text>
</comment>
<comment type="subcellular location">
    <subcellularLocation>
        <location>Secreted</location>
    </subcellularLocation>
</comment>
<comment type="tissue specificity">
    <text>Expressed by the venom gland.</text>
</comment>
<comment type="mass spectrometry"/>
<comment type="miscellaneous">
    <text evidence="8">Negative results: does not degrade beta- and gamma-chains of fibrinogen. Does not hydrolyze fibrin, azocasein and BAEE. Does not show hemorrhagic activity (PubMed:20837040).</text>
</comment>
<comment type="similarity">
    <text evidence="7">Belongs to the venom metalloproteinase (M12B) family. P-III subfamily. P-IIIa sub-subfamily.</text>
</comment>
<accession>D6PXE8</accession>
<accession>D3YRL5</accession>
<proteinExistence type="evidence at protein level"/>
<organism>
    <name type="scientific">Naja atra</name>
    <name type="common">Chinese cobra</name>
    <dbReference type="NCBI Taxonomy" id="8656"/>
    <lineage>
        <taxon>Eukaryota</taxon>
        <taxon>Metazoa</taxon>
        <taxon>Chordata</taxon>
        <taxon>Craniata</taxon>
        <taxon>Vertebrata</taxon>
        <taxon>Euteleostomi</taxon>
        <taxon>Lepidosauria</taxon>
        <taxon>Squamata</taxon>
        <taxon>Bifurcata</taxon>
        <taxon>Unidentata</taxon>
        <taxon>Episquamata</taxon>
        <taxon>Toxicofera</taxon>
        <taxon>Serpentes</taxon>
        <taxon>Colubroidea</taxon>
        <taxon>Elapidae</taxon>
        <taxon>Elapinae</taxon>
        <taxon>Naja</taxon>
    </lineage>
</organism>
<keyword id="KW-0106">Calcium</keyword>
<keyword id="KW-1216">Complement system impairing toxin</keyword>
<keyword id="KW-0903">Direct protein sequencing</keyword>
<keyword id="KW-1015">Disulfide bond</keyword>
<keyword id="KW-1206">Fibrinogenolytic toxin</keyword>
<keyword id="KW-0325">Glycoprotein</keyword>
<keyword id="KW-1199">Hemostasis impairing toxin</keyword>
<keyword id="KW-0378">Hydrolase</keyword>
<keyword id="KW-0479">Metal-binding</keyword>
<keyword id="KW-0482">Metalloprotease</keyword>
<keyword id="KW-0645">Protease</keyword>
<keyword id="KW-0964">Secreted</keyword>
<keyword id="KW-0732">Signal</keyword>
<keyword id="KW-0800">Toxin</keyword>
<keyword id="KW-0862">Zinc</keyword>